<sequence>MLKREMNIADYDAELWQAMEQEKVRQEEHIELIASENYTSPRVMQAQGSQLTNKYAEGYPGKRYYGGCEYVDIVEQLAIDRAKELFGADYANVQPHSGSQANFAVYTALLEPGDTVLGMNLAHGGHLTHGSPVNFSGKLYNIVPYGIDATGHIDYADLEKQAKEHKPKMIIGGFSAYSGVVDWAKMREIADSIGAYLFVDMAHVAGLVAAGVYPNPVPHAHVVTTTTHKTLAGPRGGLILAKGGSEELYKKLNSAVFPGGQGGPLMHVIAGKAVALKEAMEPEFKTYQQQVAKNAKAMVEVFLERGYKVVSGGTDNHLFLVDLVDKNLTGKEADAALGRANITVNKNSVPNDPKSPFVTSGIRVGTPAITRRGFKEAEAKELAGWMCDVLDSINDEAVIERIKGKVLDICARYPVYA</sequence>
<gene>
    <name evidence="1" type="primary">glyA</name>
    <name type="ordered locus">ECIAI1_2604</name>
</gene>
<reference key="1">
    <citation type="journal article" date="2009" name="PLoS Genet.">
        <title>Organised genome dynamics in the Escherichia coli species results in highly diverse adaptive paths.</title>
        <authorList>
            <person name="Touchon M."/>
            <person name="Hoede C."/>
            <person name="Tenaillon O."/>
            <person name="Barbe V."/>
            <person name="Baeriswyl S."/>
            <person name="Bidet P."/>
            <person name="Bingen E."/>
            <person name="Bonacorsi S."/>
            <person name="Bouchier C."/>
            <person name="Bouvet O."/>
            <person name="Calteau A."/>
            <person name="Chiapello H."/>
            <person name="Clermont O."/>
            <person name="Cruveiller S."/>
            <person name="Danchin A."/>
            <person name="Diard M."/>
            <person name="Dossat C."/>
            <person name="Karoui M.E."/>
            <person name="Frapy E."/>
            <person name="Garry L."/>
            <person name="Ghigo J.M."/>
            <person name="Gilles A.M."/>
            <person name="Johnson J."/>
            <person name="Le Bouguenec C."/>
            <person name="Lescat M."/>
            <person name="Mangenot S."/>
            <person name="Martinez-Jehanne V."/>
            <person name="Matic I."/>
            <person name="Nassif X."/>
            <person name="Oztas S."/>
            <person name="Petit M.A."/>
            <person name="Pichon C."/>
            <person name="Rouy Z."/>
            <person name="Ruf C.S."/>
            <person name="Schneider D."/>
            <person name="Tourret J."/>
            <person name="Vacherie B."/>
            <person name="Vallenet D."/>
            <person name="Medigue C."/>
            <person name="Rocha E.P.C."/>
            <person name="Denamur E."/>
        </authorList>
    </citation>
    <scope>NUCLEOTIDE SEQUENCE [LARGE SCALE GENOMIC DNA]</scope>
    <source>
        <strain>IAI1</strain>
    </source>
</reference>
<keyword id="KW-0007">Acetylation</keyword>
<keyword id="KW-0028">Amino-acid biosynthesis</keyword>
<keyword id="KW-0963">Cytoplasm</keyword>
<keyword id="KW-0554">One-carbon metabolism</keyword>
<keyword id="KW-0663">Pyridoxal phosphate</keyword>
<keyword id="KW-0808">Transferase</keyword>
<organism>
    <name type="scientific">Escherichia coli O8 (strain IAI1)</name>
    <dbReference type="NCBI Taxonomy" id="585034"/>
    <lineage>
        <taxon>Bacteria</taxon>
        <taxon>Pseudomonadati</taxon>
        <taxon>Pseudomonadota</taxon>
        <taxon>Gammaproteobacteria</taxon>
        <taxon>Enterobacterales</taxon>
        <taxon>Enterobacteriaceae</taxon>
        <taxon>Escherichia</taxon>
    </lineage>
</organism>
<comment type="function">
    <text evidence="1">Catalyzes the reversible interconversion of serine and glycine with tetrahydrofolate (THF) serving as the one-carbon carrier. This reaction serves as the major source of one-carbon groups required for the biosynthesis of purines, thymidylate, methionine, and other important biomolecules. Also exhibits THF-independent aldolase activity toward beta-hydroxyamino acids, producing glycine and aldehydes, via a retro-aldol mechanism.</text>
</comment>
<comment type="catalytic activity">
    <reaction evidence="1">
        <text>(6R)-5,10-methylene-5,6,7,8-tetrahydrofolate + glycine + H2O = (6S)-5,6,7,8-tetrahydrofolate + L-serine</text>
        <dbReference type="Rhea" id="RHEA:15481"/>
        <dbReference type="ChEBI" id="CHEBI:15377"/>
        <dbReference type="ChEBI" id="CHEBI:15636"/>
        <dbReference type="ChEBI" id="CHEBI:33384"/>
        <dbReference type="ChEBI" id="CHEBI:57305"/>
        <dbReference type="ChEBI" id="CHEBI:57453"/>
        <dbReference type="EC" id="2.1.2.1"/>
    </reaction>
</comment>
<comment type="cofactor">
    <cofactor evidence="1">
        <name>pyridoxal 5'-phosphate</name>
        <dbReference type="ChEBI" id="CHEBI:597326"/>
    </cofactor>
</comment>
<comment type="pathway">
    <text evidence="1">One-carbon metabolism; tetrahydrofolate interconversion.</text>
</comment>
<comment type="pathway">
    <text evidence="1">Amino-acid biosynthesis; glycine biosynthesis; glycine from L-serine: step 1/1.</text>
</comment>
<comment type="subunit">
    <text evidence="1">Homodimer.</text>
</comment>
<comment type="subcellular location">
    <subcellularLocation>
        <location evidence="1">Cytoplasm</location>
    </subcellularLocation>
</comment>
<comment type="similarity">
    <text evidence="1">Belongs to the SHMT family.</text>
</comment>
<proteinExistence type="inferred from homology"/>
<accession>B7M8A7</accession>
<protein>
    <recommendedName>
        <fullName evidence="1">Serine hydroxymethyltransferase</fullName>
        <shortName evidence="1">SHMT</shortName>
        <shortName evidence="1">Serine methylase</shortName>
        <ecNumber evidence="1">2.1.2.1</ecNumber>
    </recommendedName>
</protein>
<evidence type="ECO:0000255" key="1">
    <source>
        <dbReference type="HAMAP-Rule" id="MF_00051"/>
    </source>
</evidence>
<dbReference type="EC" id="2.1.2.1" evidence="1"/>
<dbReference type="EMBL" id="CU928160">
    <property type="protein sequence ID" value="CAQ99443.1"/>
    <property type="molecule type" value="Genomic_DNA"/>
</dbReference>
<dbReference type="RefSeq" id="WP_000919159.1">
    <property type="nucleotide sequence ID" value="NC_011741.1"/>
</dbReference>
<dbReference type="SMR" id="B7M8A7"/>
<dbReference type="GeneID" id="89517346"/>
<dbReference type="KEGG" id="ecr:ECIAI1_2604"/>
<dbReference type="HOGENOM" id="CLU_022477_2_1_6"/>
<dbReference type="UniPathway" id="UPA00193"/>
<dbReference type="UniPathway" id="UPA00288">
    <property type="reaction ID" value="UER01023"/>
</dbReference>
<dbReference type="GO" id="GO:0005829">
    <property type="term" value="C:cytosol"/>
    <property type="evidence" value="ECO:0007669"/>
    <property type="project" value="TreeGrafter"/>
</dbReference>
<dbReference type="GO" id="GO:0004372">
    <property type="term" value="F:glycine hydroxymethyltransferase activity"/>
    <property type="evidence" value="ECO:0007669"/>
    <property type="project" value="UniProtKB-UniRule"/>
</dbReference>
<dbReference type="GO" id="GO:0030170">
    <property type="term" value="F:pyridoxal phosphate binding"/>
    <property type="evidence" value="ECO:0007669"/>
    <property type="project" value="UniProtKB-UniRule"/>
</dbReference>
<dbReference type="GO" id="GO:0019264">
    <property type="term" value="P:glycine biosynthetic process from serine"/>
    <property type="evidence" value="ECO:0007669"/>
    <property type="project" value="UniProtKB-UniRule"/>
</dbReference>
<dbReference type="GO" id="GO:0035999">
    <property type="term" value="P:tetrahydrofolate interconversion"/>
    <property type="evidence" value="ECO:0007669"/>
    <property type="project" value="UniProtKB-UniRule"/>
</dbReference>
<dbReference type="CDD" id="cd00378">
    <property type="entry name" value="SHMT"/>
    <property type="match status" value="1"/>
</dbReference>
<dbReference type="FunFam" id="3.40.640.10:FF:000001">
    <property type="entry name" value="Serine hydroxymethyltransferase"/>
    <property type="match status" value="1"/>
</dbReference>
<dbReference type="FunFam" id="3.90.1150.10:FF:000003">
    <property type="entry name" value="Serine hydroxymethyltransferase"/>
    <property type="match status" value="1"/>
</dbReference>
<dbReference type="Gene3D" id="3.90.1150.10">
    <property type="entry name" value="Aspartate Aminotransferase, domain 1"/>
    <property type="match status" value="1"/>
</dbReference>
<dbReference type="Gene3D" id="3.40.640.10">
    <property type="entry name" value="Type I PLP-dependent aspartate aminotransferase-like (Major domain)"/>
    <property type="match status" value="1"/>
</dbReference>
<dbReference type="HAMAP" id="MF_00051">
    <property type="entry name" value="SHMT"/>
    <property type="match status" value="1"/>
</dbReference>
<dbReference type="InterPro" id="IPR015424">
    <property type="entry name" value="PyrdxlP-dep_Trfase"/>
</dbReference>
<dbReference type="InterPro" id="IPR015421">
    <property type="entry name" value="PyrdxlP-dep_Trfase_major"/>
</dbReference>
<dbReference type="InterPro" id="IPR015422">
    <property type="entry name" value="PyrdxlP-dep_Trfase_small"/>
</dbReference>
<dbReference type="InterPro" id="IPR001085">
    <property type="entry name" value="Ser_HO-MeTrfase"/>
</dbReference>
<dbReference type="InterPro" id="IPR049943">
    <property type="entry name" value="Ser_HO-MeTrfase-like"/>
</dbReference>
<dbReference type="InterPro" id="IPR019798">
    <property type="entry name" value="Ser_HO-MeTrfase_PLP_BS"/>
</dbReference>
<dbReference type="InterPro" id="IPR039429">
    <property type="entry name" value="SHMT-like_dom"/>
</dbReference>
<dbReference type="NCBIfam" id="NF000586">
    <property type="entry name" value="PRK00011.1"/>
    <property type="match status" value="1"/>
</dbReference>
<dbReference type="PANTHER" id="PTHR11680">
    <property type="entry name" value="SERINE HYDROXYMETHYLTRANSFERASE"/>
    <property type="match status" value="1"/>
</dbReference>
<dbReference type="PANTHER" id="PTHR11680:SF50">
    <property type="entry name" value="SERINE HYDROXYMETHYLTRANSFERASE"/>
    <property type="match status" value="1"/>
</dbReference>
<dbReference type="Pfam" id="PF00464">
    <property type="entry name" value="SHMT"/>
    <property type="match status" value="1"/>
</dbReference>
<dbReference type="PIRSF" id="PIRSF000412">
    <property type="entry name" value="SHMT"/>
    <property type="match status" value="1"/>
</dbReference>
<dbReference type="SUPFAM" id="SSF53383">
    <property type="entry name" value="PLP-dependent transferases"/>
    <property type="match status" value="1"/>
</dbReference>
<dbReference type="PROSITE" id="PS00096">
    <property type="entry name" value="SHMT"/>
    <property type="match status" value="1"/>
</dbReference>
<name>GLYA_ECO8A</name>
<feature type="chain" id="PRO_1000116830" description="Serine hydroxymethyltransferase">
    <location>
        <begin position="1"/>
        <end position="417"/>
    </location>
</feature>
<feature type="binding site" evidence="1">
    <location>
        <position position="121"/>
    </location>
    <ligand>
        <name>(6S)-5,6,7,8-tetrahydrofolate</name>
        <dbReference type="ChEBI" id="CHEBI:57453"/>
    </ligand>
</feature>
<feature type="binding site" evidence="1">
    <location>
        <begin position="125"/>
        <end position="127"/>
    </location>
    <ligand>
        <name>(6S)-5,6,7,8-tetrahydrofolate</name>
        <dbReference type="ChEBI" id="CHEBI:57453"/>
    </ligand>
</feature>
<feature type="binding site" evidence="1">
    <location>
        <begin position="355"/>
        <end position="357"/>
    </location>
    <ligand>
        <name>(6S)-5,6,7,8-tetrahydrofolate</name>
        <dbReference type="ChEBI" id="CHEBI:57453"/>
    </ligand>
</feature>
<feature type="site" description="Plays an important role in substrate specificity" evidence="1">
    <location>
        <position position="228"/>
    </location>
</feature>
<feature type="modified residue" description="N6-acetyllysine" evidence="1">
    <location>
        <position position="54"/>
    </location>
</feature>
<feature type="modified residue" description="N6-(pyridoxal phosphate)lysine" evidence="1">
    <location>
        <position position="229"/>
    </location>
</feature>
<feature type="modified residue" description="N6-acetyllysine" evidence="1">
    <location>
        <position position="250"/>
    </location>
</feature>
<feature type="modified residue" description="N6-acetyllysine" evidence="1">
    <location>
        <position position="285"/>
    </location>
</feature>
<feature type="modified residue" description="N6-acetyllysine" evidence="1">
    <location>
        <position position="354"/>
    </location>
</feature>
<feature type="modified residue" description="N6-acetyllysine" evidence="1">
    <location>
        <position position="375"/>
    </location>
</feature>